<name>PHAZ_TALFU</name>
<organism>
    <name type="scientific">Talaromyces funiculosus</name>
    <name type="common">Fruitlet core rot fungus</name>
    <name type="synonym">Penicillium funiculosum</name>
    <dbReference type="NCBI Taxonomy" id="28572"/>
    <lineage>
        <taxon>Eukaryota</taxon>
        <taxon>Fungi</taxon>
        <taxon>Dikarya</taxon>
        <taxon>Ascomycota</taxon>
        <taxon>Pezizomycotina</taxon>
        <taxon>Eurotiomycetes</taxon>
        <taxon>Eurotiomycetidae</taxon>
        <taxon>Eurotiales</taxon>
        <taxon>Trichocomaceae</taxon>
        <taxon>Talaromyces</taxon>
        <taxon>Talaromyces sect. Talaromyces</taxon>
    </lineage>
</organism>
<reference key="1">
    <citation type="submission" date="2006-11" db="EMBL/GenBank/DDBJ databases">
        <title>Molecular characterization of poly(3-hydroxybutyrate) depolymerase gene from Penicillium funiculosum.</title>
        <authorList>
            <person name="Kasuya K."/>
            <person name="Tezuka Y."/>
            <person name="Ishii N."/>
            <person name="Yamagata Y."/>
            <person name="Shiraki M."/>
            <person name="Saito T."/>
            <person name="Hisano T."/>
            <person name="Iwata T."/>
            <person name="Doi Y."/>
        </authorList>
    </citation>
    <scope>NUCLEOTIDE SEQUENCE [MRNA]</scope>
    <source>
        <strain>IFO 6354</strain>
    </source>
</reference>
<reference key="2">
    <citation type="journal article" date="2000" name="J. Polym. Environ.">
        <title>Properties of a poly(3-hydroxybutyrate) depolymerase from Penicillium funiculosum.</title>
        <authorList>
            <person name="Miyazaki S."/>
            <person name="Takahashi K."/>
            <person name="Shiraki M."/>
            <person name="Saito T."/>
            <person name="Tezuka Y."/>
            <person name="Kasuya K."/>
        </authorList>
    </citation>
    <scope>PROTEIN SEQUENCE OF 21-50</scope>
    <scope>FUNCTION</scope>
    <scope>SUBCELLULAR LOCATION</scope>
    <scope>CATALYTIC ACTIVITY</scope>
    <scope>BIOPHYSICOCHEMICAL PROPERTIES</scope>
    <scope>ACTIVITY REGULATION</scope>
    <scope>GLYCOSYLATION</scope>
</reference>
<reference key="3">
    <citation type="journal article" date="1991" name="Arch. Biochem. Biophys.">
        <title>Extracellular poly(3-hydroxybutyrate) depolymerase from Penicillium funiculosum: general characteristics and active site studies.</title>
        <authorList>
            <person name="Brucato C.L."/>
            <person name="Wong S.S."/>
        </authorList>
    </citation>
    <scope>SUBCELLULAR LOCATION</scope>
    <scope>FUNCTION</scope>
    <scope>CATALYTIC ACTIVITY</scope>
    <scope>BIOPHYSICOCHEMICAL PROPERTIES</scope>
    <scope>ACTIVITY REGULATION</scope>
    <scope>GLYCOSYLATION</scope>
</reference>
<reference evidence="11 12" key="4">
    <citation type="journal article" date="2006" name="J. Mol. Biol.">
        <title>The crystal structure of polyhydroxybutyrate depolymerase from Penicillium funiculosum provides insights into the recognition and degradation of biopolyesters.</title>
        <authorList>
            <person name="Hisano T."/>
            <person name="Kasuya K."/>
            <person name="Tezuka Y."/>
            <person name="Ishii N."/>
            <person name="Kobayashi T."/>
            <person name="Shiraki M."/>
            <person name="Oroudjev E."/>
            <person name="Hansma H."/>
            <person name="Iwata T."/>
            <person name="Doi Y."/>
            <person name="Saito T."/>
            <person name="Miki K."/>
        </authorList>
    </citation>
    <scope>X-RAY CRYSTALLOGRAPHY (1.66 ANGSTROMS) OF 21-338</scope>
    <scope>FUNCTION</scope>
    <scope>ACTIVE SITE</scope>
    <scope>DISULFIDE BONDS</scope>
    <scope>GLYCOSYLATION AT ASN-144</scope>
</reference>
<keyword id="KW-0002">3D-structure</keyword>
<keyword id="KW-0903">Direct protein sequencing</keyword>
<keyword id="KW-1015">Disulfide bond</keyword>
<keyword id="KW-0325">Glycoprotein</keyword>
<keyword id="KW-0378">Hydrolase</keyword>
<keyword id="KW-0442">Lipid degradation</keyword>
<keyword id="KW-0443">Lipid metabolism</keyword>
<keyword id="KW-0964">Secreted</keyword>
<keyword id="KW-0719">Serine esterase</keyword>
<keyword id="KW-0732">Signal</keyword>
<evidence type="ECO:0000255" key="1"/>
<evidence type="ECO:0000255" key="2">
    <source>
        <dbReference type="PROSITE-ProRule" id="PRU00498"/>
    </source>
</evidence>
<evidence type="ECO:0000269" key="3">
    <source>
    </source>
</evidence>
<evidence type="ECO:0000269" key="4">
    <source>
    </source>
</evidence>
<evidence type="ECO:0000269" key="5">
    <source ref="1"/>
</evidence>
<evidence type="ECO:0000269" key="6">
    <source ref="2"/>
</evidence>
<evidence type="ECO:0000303" key="7">
    <source>
    </source>
</evidence>
<evidence type="ECO:0000303" key="8">
    <source ref="1"/>
</evidence>
<evidence type="ECO:0000303" key="9">
    <source ref="2"/>
</evidence>
<evidence type="ECO:0000305" key="10"/>
<evidence type="ECO:0007744" key="11">
    <source>
        <dbReference type="PDB" id="2D80"/>
    </source>
</evidence>
<evidence type="ECO:0007744" key="12">
    <source>
        <dbReference type="PDB" id="2D81"/>
    </source>
</evidence>
<evidence type="ECO:0007829" key="13">
    <source>
        <dbReference type="PDB" id="2D81"/>
    </source>
</evidence>
<accession>B2NHN2</accession>
<dbReference type="EC" id="3.1.1.75" evidence="4 6"/>
<dbReference type="EMBL" id="AB281621">
    <property type="protein sequence ID" value="BAG32152.1"/>
    <property type="molecule type" value="mRNA"/>
</dbReference>
<dbReference type="PDB" id="2D80">
    <property type="method" value="X-ray"/>
    <property type="resolution" value="1.70 A"/>
    <property type="chains" value="A=21-338"/>
</dbReference>
<dbReference type="PDB" id="2D81">
    <property type="method" value="X-ray"/>
    <property type="resolution" value="1.66 A"/>
    <property type="chains" value="A=21-338"/>
</dbReference>
<dbReference type="PDBsum" id="2D80"/>
<dbReference type="PDBsum" id="2D81"/>
<dbReference type="SMR" id="B2NHN2"/>
<dbReference type="ESTHER" id="penfu-PHAZ">
    <property type="family name" value="Esterase_phb_PHAZ"/>
</dbReference>
<dbReference type="GlyCosmos" id="B2NHN2">
    <property type="glycosylation" value="1 site, No reported glycans"/>
</dbReference>
<dbReference type="iPTMnet" id="B2NHN2"/>
<dbReference type="EvolutionaryTrace" id="B2NHN2"/>
<dbReference type="GO" id="GO:0005576">
    <property type="term" value="C:extracellular region"/>
    <property type="evidence" value="ECO:0007669"/>
    <property type="project" value="UniProtKB-SubCell"/>
</dbReference>
<dbReference type="GO" id="GO:0052689">
    <property type="term" value="F:carboxylic ester hydrolase activity"/>
    <property type="evidence" value="ECO:0007669"/>
    <property type="project" value="UniProtKB-KW"/>
</dbReference>
<dbReference type="GO" id="GO:0008236">
    <property type="term" value="F:serine-type peptidase activity"/>
    <property type="evidence" value="ECO:0007669"/>
    <property type="project" value="InterPro"/>
</dbReference>
<dbReference type="GO" id="GO:0016042">
    <property type="term" value="P:lipid catabolic process"/>
    <property type="evidence" value="ECO:0007669"/>
    <property type="project" value="UniProtKB-KW"/>
</dbReference>
<dbReference type="GO" id="GO:0006508">
    <property type="term" value="P:proteolysis"/>
    <property type="evidence" value="ECO:0007669"/>
    <property type="project" value="InterPro"/>
</dbReference>
<dbReference type="Gene3D" id="3.40.50.1820">
    <property type="entry name" value="alpha/beta hydrolase"/>
    <property type="match status" value="2"/>
</dbReference>
<dbReference type="InterPro" id="IPR029058">
    <property type="entry name" value="AB_hydrolase_fold"/>
</dbReference>
<dbReference type="InterPro" id="IPR001375">
    <property type="entry name" value="Peptidase_S9_cat"/>
</dbReference>
<dbReference type="PANTHER" id="PTHR42972:SF8">
    <property type="entry name" value="POLYHYDROXYBUTYRATE DEPOLYMERASE"/>
    <property type="match status" value="1"/>
</dbReference>
<dbReference type="PANTHER" id="PTHR42972">
    <property type="entry name" value="TOL-PAL SYSTEM PROTEIN TOLB"/>
    <property type="match status" value="1"/>
</dbReference>
<dbReference type="Pfam" id="PF00326">
    <property type="entry name" value="Peptidase_S9"/>
    <property type="match status" value="1"/>
</dbReference>
<dbReference type="SUPFAM" id="SSF53474">
    <property type="entry name" value="alpha/beta-Hydrolases"/>
    <property type="match status" value="1"/>
</dbReference>
<comment type="function">
    <text evidence="3 4 6">Esterase involved in the hydrolysis of polyhydroxybutyrate, a microbial polyester that can be produced from renewable resources.</text>
</comment>
<comment type="catalytic activity">
    <reaction evidence="4 6">
        <text>[(3R)-hydroxybutanoate](n) + H2O = [(3R)-hydroxybutanoate](n-1) + (R)-3-hydroxybutanoate + H(+)</text>
        <dbReference type="Rhea" id="RHEA:11248"/>
        <dbReference type="Rhea" id="RHEA-COMP:14464"/>
        <dbReference type="Rhea" id="RHEA-COMP:14518"/>
        <dbReference type="ChEBI" id="CHEBI:8298"/>
        <dbReference type="ChEBI" id="CHEBI:10983"/>
        <dbReference type="ChEBI" id="CHEBI:15377"/>
        <dbReference type="ChEBI" id="CHEBI:15378"/>
        <dbReference type="EC" id="3.1.1.75"/>
    </reaction>
    <physiologicalReaction direction="left-to-right" evidence="3 4 6">
        <dbReference type="Rhea" id="RHEA:11249"/>
    </physiologicalReaction>
</comment>
<comment type="activity regulation">
    <text evidence="4 6">The enzyme is completely inhibited by dithiothreitol (DTT) and diisopropylfluorophosphate (DFP), and partially inhibited by HgCl(2) and by enzyme3-(p-nitrophenoxy)propane (EPNP) (PubMed:1929416, Ref.2). Activity is not affected by N-ethylmaleimide (NEM) or phenylmethylsulfonyl fluoride (PMSF) (PubMed:1929416, Ref.2).</text>
</comment>
<comment type="biophysicochemical properties">
    <phDependence>
        <text evidence="4 6">Optimum pH is 6.0.</text>
    </phDependence>
</comment>
<comment type="subcellular location">
    <subcellularLocation>
        <location evidence="4 6">Secreted</location>
    </subcellularLocation>
</comment>
<comment type="similarity">
    <text evidence="10">Belongs to the carbohydrate esterase 1 (CE1) family.</text>
</comment>
<gene>
    <name evidence="8" type="primary">phaZ</name>
</gene>
<sequence>MFDSVKIAWLVALGAAQVAATALPAFNVNPNSVSVSGLSSGGYMAAQLGVAYSDVFNVGFGVFAGGPYDCARNQYYTSCMYNGYPSITTPTANMKSWSGNQIASVANLGQRKIYMWTGSSDTTVGPNVMNQLKAQLGNFDNSANVSYVTTTGAVHTFPTDFNGAGDNSCSLSTSPYISNCNYDGAGAALKWIYGSLNARNTGTLSGSVLSFAQSGSYGANGMDTTGYLYVPQSCASGATVCSLHVALHGCLQSYSSIGSRFIQNTGYNKWADTNNMIILYPQAIPDYTIHAIWNGGVLSNPNGCWDWVGWYGSNADQIGGVQMAAIVGQVKQIVSGFQG</sequence>
<feature type="signal peptide" evidence="5">
    <location>
        <begin position="1"/>
        <end position="20"/>
    </location>
</feature>
<feature type="chain" id="PRO_5029038216" description="Polyhydroxybutyrate depolymerase" evidence="1">
    <location>
        <begin position="21"/>
        <end position="339"/>
    </location>
</feature>
<feature type="active site" evidence="3">
    <location>
        <position position="39"/>
    </location>
</feature>
<feature type="active site" evidence="3">
    <location>
        <position position="121"/>
    </location>
</feature>
<feature type="active site" evidence="3">
    <location>
        <position position="155"/>
    </location>
</feature>
<feature type="binding site" evidence="12">
    <location>
        <position position="307"/>
    </location>
    <ligand>
        <name>(3R)-hydroxybutanoate trimer</name>
        <dbReference type="ChEBI" id="CHEBI:140385"/>
    </ligand>
</feature>
<feature type="glycosylation site" description="N-linked (GlcNAc...) asparagine" evidence="2 3 4 11 12">
    <location>
        <position position="144"/>
    </location>
</feature>
<feature type="disulfide bond" evidence="11 12">
    <location>
        <begin position="70"/>
        <end position="79"/>
    </location>
</feature>
<feature type="disulfide bond" evidence="11 12">
    <location>
        <begin position="169"/>
        <end position="180"/>
    </location>
</feature>
<feature type="disulfide bond" evidence="11 12">
    <location>
        <begin position="234"/>
        <end position="241"/>
    </location>
</feature>
<feature type="disulfide bond" evidence="11 12">
    <location>
        <begin position="250"/>
        <end position="304"/>
    </location>
</feature>
<feature type="strand" evidence="13">
    <location>
        <begin position="28"/>
        <end position="38"/>
    </location>
</feature>
<feature type="helix" evidence="13">
    <location>
        <begin position="40"/>
        <end position="51"/>
    </location>
</feature>
<feature type="turn" evidence="13">
    <location>
        <begin position="52"/>
        <end position="55"/>
    </location>
</feature>
<feature type="strand" evidence="13">
    <location>
        <begin position="58"/>
        <end position="64"/>
    </location>
</feature>
<feature type="turn" evidence="13">
    <location>
        <begin position="68"/>
        <end position="71"/>
    </location>
</feature>
<feature type="strand" evidence="13">
    <location>
        <begin position="72"/>
        <end position="74"/>
    </location>
</feature>
<feature type="helix" evidence="13">
    <location>
        <begin position="76"/>
        <end position="79"/>
    </location>
</feature>
<feature type="helix" evidence="13">
    <location>
        <begin position="88"/>
        <end position="97"/>
    </location>
</feature>
<feature type="turn" evidence="13">
    <location>
        <begin position="99"/>
        <end position="101"/>
    </location>
</feature>
<feature type="helix" evidence="13">
    <location>
        <begin position="105"/>
        <end position="110"/>
    </location>
</feature>
<feature type="strand" evidence="13">
    <location>
        <begin position="112"/>
        <end position="118"/>
    </location>
</feature>
<feature type="helix" evidence="13">
    <location>
        <begin position="126"/>
        <end position="136"/>
    </location>
</feature>
<feature type="turn" evidence="13">
    <location>
        <begin position="137"/>
        <end position="139"/>
    </location>
</feature>
<feature type="helix" evidence="13">
    <location>
        <begin position="142"/>
        <end position="144"/>
    </location>
</feature>
<feature type="strand" evidence="13">
    <location>
        <begin position="145"/>
        <end position="150"/>
    </location>
</feature>
<feature type="strand" evidence="13">
    <location>
        <begin position="155"/>
        <end position="161"/>
    </location>
</feature>
<feature type="strand" evidence="13">
    <location>
        <begin position="177"/>
        <end position="179"/>
    </location>
</feature>
<feature type="helix" evidence="13">
    <location>
        <begin position="184"/>
        <end position="193"/>
    </location>
</feature>
<feature type="strand" evidence="13">
    <location>
        <begin position="205"/>
        <end position="212"/>
    </location>
</feature>
<feature type="helix" evidence="13">
    <location>
        <begin position="215"/>
        <end position="217"/>
    </location>
</feature>
<feature type="strand" evidence="13">
    <location>
        <begin position="224"/>
        <end position="230"/>
    </location>
</feature>
<feature type="helix" evidence="13">
    <location>
        <begin position="232"/>
        <end position="235"/>
    </location>
</feature>
<feature type="strand" evidence="13">
    <location>
        <begin position="236"/>
        <end position="239"/>
    </location>
</feature>
<feature type="strand" evidence="13">
    <location>
        <begin position="241"/>
        <end position="247"/>
    </location>
</feature>
<feature type="helix" evidence="13">
    <location>
        <begin position="254"/>
        <end position="257"/>
    </location>
</feature>
<feature type="helix" evidence="13">
    <location>
        <begin position="260"/>
        <end position="264"/>
    </location>
</feature>
<feature type="helix" evidence="13">
    <location>
        <begin position="267"/>
        <end position="271"/>
    </location>
</feature>
<feature type="turn" evidence="13">
    <location>
        <begin position="272"/>
        <end position="275"/>
    </location>
</feature>
<feature type="strand" evidence="13">
    <location>
        <begin position="276"/>
        <end position="280"/>
    </location>
</feature>
<feature type="strand" evidence="13">
    <location>
        <begin position="286"/>
        <end position="291"/>
    </location>
</feature>
<feature type="strand" evidence="13">
    <location>
        <begin position="293"/>
        <end position="300"/>
    </location>
</feature>
<feature type="strand" evidence="13">
    <location>
        <begin position="307"/>
        <end position="309"/>
    </location>
</feature>
<feature type="turn" evidence="13">
    <location>
        <begin position="313"/>
        <end position="316"/>
    </location>
</feature>
<feature type="helix" evidence="13">
    <location>
        <begin position="321"/>
        <end position="334"/>
    </location>
</feature>
<protein>
    <recommendedName>
        <fullName evidence="7">Polyhydroxybutyrate depolymerase</fullName>
        <shortName evidence="9">PHB depolymerase</shortName>
        <ecNumber evidence="4 6">3.1.1.75</ecNumber>
    </recommendedName>
</protein>
<proteinExistence type="evidence at protein level"/>